<feature type="signal peptide" evidence="4">
    <location>
        <begin position="1"/>
        <end position="21"/>
    </location>
</feature>
<feature type="propeptide" id="PRO_0000370680" evidence="1">
    <location>
        <begin position="22"/>
        <end position="46"/>
    </location>
</feature>
<feature type="peptide" id="PRO_0000370681" description="Alpha-conotoxin-like Pu1.1">
    <location>
        <begin position="47"/>
        <end position="63"/>
    </location>
</feature>
<feature type="region of interest" description="Lacks the Ser-Xaa-Pro motif that is crucial for potent interaction with nAChR" evidence="5">
    <location>
        <begin position="51"/>
        <end position="53"/>
    </location>
</feature>
<feature type="modified residue" description="Pyrrolidone carboxylic acid" evidence="1">
    <location>
        <position position="47"/>
    </location>
</feature>
<feature type="modified residue" description="Cysteine amide" evidence="1">
    <location>
        <position position="63"/>
    </location>
</feature>
<feature type="disulfide bond" evidence="2">
    <location>
        <begin position="49"/>
        <end position="55"/>
    </location>
</feature>
<feature type="disulfide bond" evidence="2">
    <location>
        <begin position="50"/>
        <end position="63"/>
    </location>
</feature>
<proteinExistence type="inferred from homology"/>
<dbReference type="EMBL" id="DQ309775">
    <property type="protein sequence ID" value="ABC39768.1"/>
    <property type="molecule type" value="Genomic_DNA"/>
</dbReference>
<dbReference type="EMBL" id="DQ359142">
    <property type="protein sequence ID" value="ABD48793.1"/>
    <property type="status" value="ALT_INIT"/>
    <property type="molecule type" value="Genomic_DNA"/>
</dbReference>
<dbReference type="ConoServer" id="542">
    <property type="toxin name" value="Pu1.1 precursor"/>
</dbReference>
<dbReference type="GO" id="GO:0005576">
    <property type="term" value="C:extracellular region"/>
    <property type="evidence" value="ECO:0007669"/>
    <property type="project" value="UniProtKB-SubCell"/>
</dbReference>
<dbReference type="GO" id="GO:0035792">
    <property type="term" value="C:host cell postsynaptic membrane"/>
    <property type="evidence" value="ECO:0007669"/>
    <property type="project" value="UniProtKB-KW"/>
</dbReference>
<dbReference type="GO" id="GO:0030550">
    <property type="term" value="F:acetylcholine receptor inhibitor activity"/>
    <property type="evidence" value="ECO:0007669"/>
    <property type="project" value="UniProtKB-KW"/>
</dbReference>
<dbReference type="GO" id="GO:0099106">
    <property type="term" value="F:ion channel regulator activity"/>
    <property type="evidence" value="ECO:0007669"/>
    <property type="project" value="UniProtKB-KW"/>
</dbReference>
<dbReference type="GO" id="GO:0090729">
    <property type="term" value="F:toxin activity"/>
    <property type="evidence" value="ECO:0007669"/>
    <property type="project" value="UniProtKB-KW"/>
</dbReference>
<dbReference type="InterPro" id="IPR009958">
    <property type="entry name" value="Conotoxin_a-typ"/>
</dbReference>
<dbReference type="Pfam" id="PF07365">
    <property type="entry name" value="Toxin_8"/>
    <property type="match status" value="1"/>
</dbReference>
<evidence type="ECO:0000250" key="1"/>
<evidence type="ECO:0000250" key="2">
    <source>
        <dbReference type="UniProtKB" id="P56636"/>
    </source>
</evidence>
<evidence type="ECO:0000250" key="3">
    <source>
        <dbReference type="UniProtKB" id="Q2I2R8"/>
    </source>
</evidence>
<evidence type="ECO:0000255" key="4"/>
<evidence type="ECO:0000305" key="5"/>
<name>CA11_CONPL</name>
<organism>
    <name type="scientific">Conus pulicarius</name>
    <name type="common">Flea-bitten cone</name>
    <dbReference type="NCBI Taxonomy" id="93154"/>
    <lineage>
        <taxon>Eukaryota</taxon>
        <taxon>Metazoa</taxon>
        <taxon>Spiralia</taxon>
        <taxon>Lophotrochozoa</taxon>
        <taxon>Mollusca</taxon>
        <taxon>Gastropoda</taxon>
        <taxon>Caenogastropoda</taxon>
        <taxon>Neogastropoda</taxon>
        <taxon>Conoidea</taxon>
        <taxon>Conidae</taxon>
        <taxon>Conus</taxon>
    </lineage>
</organism>
<reference key="1">
    <citation type="journal article" date="2007" name="Toxicon">
        <title>From the identification of gene organization of alpha conotoxins to the cloning of novel toxins.</title>
        <authorList>
            <person name="Yuan D.-D."/>
            <person name="Han Y.-H."/>
            <person name="Wang C.-G."/>
            <person name="Chi C.-W."/>
        </authorList>
    </citation>
    <scope>NUCLEOTIDE SEQUENCE [GENOMIC DNA]</scope>
</reference>
<sequence length="67" mass="7507">MGMRMMFTVFLLVVLATTVVSFTSDRTSDGRNAAFNAFDLIALTARQNCCNVPGCWAKYKHLCGRKR</sequence>
<accession>A0SE60</accession>
<accession>A6M936</accession>
<comment type="function">
    <text evidence="3">Alpha-conotoxins act on postsynaptic membranes, they bind to the nicotinic acetylcholine receptors (nAChR) and thus inhibit them (By similarity). Has possibly a distinct nAChR binding mode from other alpha-conotoxins, due to a different three residue motif (lacks the Ser-Xaa-Pro motif) (By similarity).</text>
</comment>
<comment type="subcellular location">
    <subcellularLocation>
        <location evidence="5">Secreted</location>
    </subcellularLocation>
</comment>
<comment type="tissue specificity">
    <text evidence="5">Expressed by the venom duct.</text>
</comment>
<comment type="domain">
    <text evidence="5">The cysteine framework is I (CC-C-C). Alpha4/7 pattern.</text>
</comment>
<comment type="similarity">
    <text evidence="5">Belongs to the conotoxin A superfamily.</text>
</comment>
<comment type="sequence caution" evidence="5">
    <conflict type="erroneous initiation">
        <sequence resource="EMBL-CDS" id="ABD48793"/>
    </conflict>
</comment>
<keyword id="KW-0008">Acetylcholine receptor inhibiting toxin</keyword>
<keyword id="KW-0027">Amidation</keyword>
<keyword id="KW-1015">Disulfide bond</keyword>
<keyword id="KW-0872">Ion channel impairing toxin</keyword>
<keyword id="KW-0528">Neurotoxin</keyword>
<keyword id="KW-0629">Postsynaptic neurotoxin</keyword>
<keyword id="KW-0873">Pyrrolidone carboxylic acid</keyword>
<keyword id="KW-0964">Secreted</keyword>
<keyword id="KW-0732">Signal</keyword>
<keyword id="KW-0800">Toxin</keyword>
<protein>
    <recommendedName>
        <fullName>Alpha-conotoxin-like Pu1.1</fullName>
    </recommendedName>
</protein>